<organism>
    <name type="scientific">Thiobacillus denitrificans (strain ATCC 25259 / T1)</name>
    <dbReference type="NCBI Taxonomy" id="292415"/>
    <lineage>
        <taxon>Bacteria</taxon>
        <taxon>Pseudomonadati</taxon>
        <taxon>Pseudomonadota</taxon>
        <taxon>Betaproteobacteria</taxon>
        <taxon>Nitrosomonadales</taxon>
        <taxon>Thiobacillaceae</taxon>
        <taxon>Thiobacillus</taxon>
    </lineage>
</organism>
<keyword id="KW-0067">ATP-binding</keyword>
<keyword id="KW-0131">Cell cycle</keyword>
<keyword id="KW-0132">Cell division</keyword>
<keyword id="KW-0133">Cell shape</keyword>
<keyword id="KW-0961">Cell wall biogenesis/degradation</keyword>
<keyword id="KW-0963">Cytoplasm</keyword>
<keyword id="KW-0436">Ligase</keyword>
<keyword id="KW-0547">Nucleotide-binding</keyword>
<keyword id="KW-0573">Peptidoglycan synthesis</keyword>
<keyword id="KW-1185">Reference proteome</keyword>
<feature type="chain" id="PRO_0000257259" description="UDP-N-acetylmuramoylalanine--D-glutamate ligase">
    <location>
        <begin position="1"/>
        <end position="474"/>
    </location>
</feature>
<feature type="binding site" evidence="1">
    <location>
        <begin position="134"/>
        <end position="140"/>
    </location>
    <ligand>
        <name>ATP</name>
        <dbReference type="ChEBI" id="CHEBI:30616"/>
    </ligand>
</feature>
<proteinExistence type="inferred from homology"/>
<comment type="function">
    <text evidence="1">Cell wall formation. Catalyzes the addition of glutamate to the nucleotide precursor UDP-N-acetylmuramoyl-L-alanine (UMA).</text>
</comment>
<comment type="catalytic activity">
    <reaction evidence="1">
        <text>UDP-N-acetyl-alpha-D-muramoyl-L-alanine + D-glutamate + ATP = UDP-N-acetyl-alpha-D-muramoyl-L-alanyl-D-glutamate + ADP + phosphate + H(+)</text>
        <dbReference type="Rhea" id="RHEA:16429"/>
        <dbReference type="ChEBI" id="CHEBI:15378"/>
        <dbReference type="ChEBI" id="CHEBI:29986"/>
        <dbReference type="ChEBI" id="CHEBI:30616"/>
        <dbReference type="ChEBI" id="CHEBI:43474"/>
        <dbReference type="ChEBI" id="CHEBI:83898"/>
        <dbReference type="ChEBI" id="CHEBI:83900"/>
        <dbReference type="ChEBI" id="CHEBI:456216"/>
        <dbReference type="EC" id="6.3.2.9"/>
    </reaction>
</comment>
<comment type="pathway">
    <text evidence="1">Cell wall biogenesis; peptidoglycan biosynthesis.</text>
</comment>
<comment type="subcellular location">
    <subcellularLocation>
        <location evidence="1">Cytoplasm</location>
    </subcellularLocation>
</comment>
<comment type="similarity">
    <text evidence="1">Belongs to the MurCDEF family.</text>
</comment>
<accession>Q3SMH5</accession>
<gene>
    <name evidence="1" type="primary">murD</name>
    <name type="ordered locus">Tbd_0117</name>
</gene>
<sequence>MNYDALQLSGRKVLVLGLGDTGLSCARWLSVHGADVSVADSREAPPHAARLAETLPQVALFTGPFEAAHLAAADMLVLSPGVPLSEPAVAQAVAQGVEAVGDVELFARALAVLNAQRAALPAPQAAMRVIAITGSNGKSTVTAMCGDMCRMAGLTVCVAGNIGLPVLDALHEIEQGAAPLPQVWVLELSSFQLETTSSLDATAAAVLNLSEDHMDRYPDMAAYAAAKARIFSGNGVQVLNRDDPRTLAMAIPGRHVVSFGLDRCPTDENFGLCEDELCLGGDMLMPLSVLAVPGLHNAANALAALALTRALDLPIEALLRGLMHFKGLPHRVEKVADIDGVTWYDDSKGTNVGATEAALYGMGRRKAVVILGGDGKGQDFGPLKAAVAANARAVVLIGRDAVAIEAAIEDSGVASYRADTLPDAVEQAARLAEPGDAVLLSPACASFDMFRNYVHRAEVFVDAVKKLAAQRAQV</sequence>
<dbReference type="EC" id="6.3.2.9" evidence="1"/>
<dbReference type="EMBL" id="CP000116">
    <property type="protein sequence ID" value="AAZ96070.1"/>
    <property type="molecule type" value="Genomic_DNA"/>
</dbReference>
<dbReference type="RefSeq" id="WP_011310630.1">
    <property type="nucleotide sequence ID" value="NC_007404.1"/>
</dbReference>
<dbReference type="SMR" id="Q3SMH5"/>
<dbReference type="STRING" id="292415.Tbd_0117"/>
<dbReference type="KEGG" id="tbd:Tbd_0117"/>
<dbReference type="eggNOG" id="COG0771">
    <property type="taxonomic scope" value="Bacteria"/>
</dbReference>
<dbReference type="HOGENOM" id="CLU_032540_1_0_4"/>
<dbReference type="OrthoDB" id="9809796at2"/>
<dbReference type="UniPathway" id="UPA00219"/>
<dbReference type="Proteomes" id="UP000008291">
    <property type="component" value="Chromosome"/>
</dbReference>
<dbReference type="GO" id="GO:0005737">
    <property type="term" value="C:cytoplasm"/>
    <property type="evidence" value="ECO:0007669"/>
    <property type="project" value="UniProtKB-SubCell"/>
</dbReference>
<dbReference type="GO" id="GO:0005524">
    <property type="term" value="F:ATP binding"/>
    <property type="evidence" value="ECO:0007669"/>
    <property type="project" value="UniProtKB-UniRule"/>
</dbReference>
<dbReference type="GO" id="GO:0008764">
    <property type="term" value="F:UDP-N-acetylmuramoylalanine-D-glutamate ligase activity"/>
    <property type="evidence" value="ECO:0007669"/>
    <property type="project" value="UniProtKB-UniRule"/>
</dbReference>
<dbReference type="GO" id="GO:0051301">
    <property type="term" value="P:cell division"/>
    <property type="evidence" value="ECO:0007669"/>
    <property type="project" value="UniProtKB-KW"/>
</dbReference>
<dbReference type="GO" id="GO:0071555">
    <property type="term" value="P:cell wall organization"/>
    <property type="evidence" value="ECO:0007669"/>
    <property type="project" value="UniProtKB-KW"/>
</dbReference>
<dbReference type="GO" id="GO:0009252">
    <property type="term" value="P:peptidoglycan biosynthetic process"/>
    <property type="evidence" value="ECO:0007669"/>
    <property type="project" value="UniProtKB-UniRule"/>
</dbReference>
<dbReference type="GO" id="GO:0008360">
    <property type="term" value="P:regulation of cell shape"/>
    <property type="evidence" value="ECO:0007669"/>
    <property type="project" value="UniProtKB-KW"/>
</dbReference>
<dbReference type="Gene3D" id="3.90.190.20">
    <property type="entry name" value="Mur ligase, C-terminal domain"/>
    <property type="match status" value="1"/>
</dbReference>
<dbReference type="Gene3D" id="3.40.1190.10">
    <property type="entry name" value="Mur-like, catalytic domain"/>
    <property type="match status" value="1"/>
</dbReference>
<dbReference type="Gene3D" id="3.40.50.720">
    <property type="entry name" value="NAD(P)-binding Rossmann-like Domain"/>
    <property type="match status" value="1"/>
</dbReference>
<dbReference type="HAMAP" id="MF_00639">
    <property type="entry name" value="MurD"/>
    <property type="match status" value="1"/>
</dbReference>
<dbReference type="InterPro" id="IPR036565">
    <property type="entry name" value="Mur-like_cat_sf"/>
</dbReference>
<dbReference type="InterPro" id="IPR004101">
    <property type="entry name" value="Mur_ligase_C"/>
</dbReference>
<dbReference type="InterPro" id="IPR036615">
    <property type="entry name" value="Mur_ligase_C_dom_sf"/>
</dbReference>
<dbReference type="InterPro" id="IPR013221">
    <property type="entry name" value="Mur_ligase_cen"/>
</dbReference>
<dbReference type="InterPro" id="IPR005762">
    <property type="entry name" value="MurD"/>
</dbReference>
<dbReference type="NCBIfam" id="TIGR01087">
    <property type="entry name" value="murD"/>
    <property type="match status" value="1"/>
</dbReference>
<dbReference type="PANTHER" id="PTHR43692">
    <property type="entry name" value="UDP-N-ACETYLMURAMOYLALANINE--D-GLUTAMATE LIGASE"/>
    <property type="match status" value="1"/>
</dbReference>
<dbReference type="PANTHER" id="PTHR43692:SF1">
    <property type="entry name" value="UDP-N-ACETYLMURAMOYLALANINE--D-GLUTAMATE LIGASE"/>
    <property type="match status" value="1"/>
</dbReference>
<dbReference type="Pfam" id="PF02875">
    <property type="entry name" value="Mur_ligase_C"/>
    <property type="match status" value="1"/>
</dbReference>
<dbReference type="Pfam" id="PF08245">
    <property type="entry name" value="Mur_ligase_M"/>
    <property type="match status" value="1"/>
</dbReference>
<dbReference type="Pfam" id="PF21799">
    <property type="entry name" value="MurD-like_N"/>
    <property type="match status" value="1"/>
</dbReference>
<dbReference type="SUPFAM" id="SSF51984">
    <property type="entry name" value="MurCD N-terminal domain"/>
    <property type="match status" value="1"/>
</dbReference>
<dbReference type="SUPFAM" id="SSF53623">
    <property type="entry name" value="MurD-like peptide ligases, catalytic domain"/>
    <property type="match status" value="1"/>
</dbReference>
<dbReference type="SUPFAM" id="SSF53244">
    <property type="entry name" value="MurD-like peptide ligases, peptide-binding domain"/>
    <property type="match status" value="1"/>
</dbReference>
<name>MURD_THIDA</name>
<protein>
    <recommendedName>
        <fullName evidence="1">UDP-N-acetylmuramoylalanine--D-glutamate ligase</fullName>
        <ecNumber evidence="1">6.3.2.9</ecNumber>
    </recommendedName>
    <alternativeName>
        <fullName evidence="1">D-glutamic acid-adding enzyme</fullName>
    </alternativeName>
    <alternativeName>
        <fullName evidence="1">UDP-N-acetylmuramoyl-L-alanyl-D-glutamate synthetase</fullName>
    </alternativeName>
</protein>
<reference key="1">
    <citation type="journal article" date="2006" name="J. Bacteriol.">
        <title>The genome sequence of the obligately chemolithoautotrophic, facultatively anaerobic bacterium Thiobacillus denitrificans.</title>
        <authorList>
            <person name="Beller H.R."/>
            <person name="Chain P.S."/>
            <person name="Letain T.E."/>
            <person name="Chakicherla A."/>
            <person name="Larimer F.W."/>
            <person name="Richardson P.M."/>
            <person name="Coleman M.A."/>
            <person name="Wood A.P."/>
            <person name="Kelly D.P."/>
        </authorList>
    </citation>
    <scope>NUCLEOTIDE SEQUENCE [LARGE SCALE GENOMIC DNA]</scope>
    <source>
        <strain>ATCC 25259 / T1</strain>
    </source>
</reference>
<evidence type="ECO:0000255" key="1">
    <source>
        <dbReference type="HAMAP-Rule" id="MF_00639"/>
    </source>
</evidence>